<accession>Q00685</accession>
<evidence type="ECO:0000250" key="1">
    <source>
        <dbReference type="UniProtKB" id="P01024"/>
    </source>
</evidence>
<evidence type="ECO:0000255" key="2"/>
<evidence type="ECO:0000255" key="3">
    <source>
        <dbReference type="PROSITE-ProRule" id="PRU00022"/>
    </source>
</evidence>
<evidence type="ECO:0000255" key="4">
    <source>
        <dbReference type="PROSITE-ProRule" id="PRU00295"/>
    </source>
</evidence>
<name>CO3_LETCA</name>
<dbReference type="EMBL" id="D10087">
    <property type="protein sequence ID" value="BAA00983.1"/>
    <property type="molecule type" value="mRNA"/>
</dbReference>
<dbReference type="PIR" id="I50806">
    <property type="entry name" value="I50806"/>
</dbReference>
<dbReference type="SMR" id="Q00685"/>
<dbReference type="MEROPS" id="I39.951"/>
<dbReference type="GlyCosmos" id="Q00685">
    <property type="glycosylation" value="5 sites, No reported glycans"/>
</dbReference>
<dbReference type="GO" id="GO:0005615">
    <property type="term" value="C:extracellular space"/>
    <property type="evidence" value="ECO:0007669"/>
    <property type="project" value="InterPro"/>
</dbReference>
<dbReference type="GO" id="GO:0004866">
    <property type="term" value="F:endopeptidase inhibitor activity"/>
    <property type="evidence" value="ECO:0007669"/>
    <property type="project" value="InterPro"/>
</dbReference>
<dbReference type="GO" id="GO:0006958">
    <property type="term" value="P:complement activation, classical pathway"/>
    <property type="evidence" value="ECO:0007669"/>
    <property type="project" value="UniProtKB-KW"/>
</dbReference>
<dbReference type="GO" id="GO:0006954">
    <property type="term" value="P:inflammatory response"/>
    <property type="evidence" value="ECO:0007669"/>
    <property type="project" value="UniProtKB-KW"/>
</dbReference>
<dbReference type="GO" id="GO:0045087">
    <property type="term" value="P:innate immune response"/>
    <property type="evidence" value="ECO:0007669"/>
    <property type="project" value="UniProtKB-KW"/>
</dbReference>
<dbReference type="CDD" id="cd00017">
    <property type="entry name" value="ANATO"/>
    <property type="match status" value="1"/>
</dbReference>
<dbReference type="CDD" id="cd02896">
    <property type="entry name" value="complement_C3_C4_C5"/>
    <property type="match status" value="1"/>
</dbReference>
<dbReference type="CDD" id="cd03574">
    <property type="entry name" value="NTR_complement_C345C"/>
    <property type="match status" value="1"/>
</dbReference>
<dbReference type="FunFam" id="2.60.40.10:FF:000155">
    <property type="entry name" value="complement C3 isoform X1"/>
    <property type="match status" value="1"/>
</dbReference>
<dbReference type="Gene3D" id="1.50.10.20">
    <property type="match status" value="1"/>
</dbReference>
<dbReference type="Gene3D" id="2.20.130.20">
    <property type="match status" value="1"/>
</dbReference>
<dbReference type="Gene3D" id="2.40.50.120">
    <property type="match status" value="1"/>
</dbReference>
<dbReference type="Gene3D" id="2.60.120.1540">
    <property type="match status" value="1"/>
</dbReference>
<dbReference type="Gene3D" id="2.60.40.1930">
    <property type="match status" value="3"/>
</dbReference>
<dbReference type="Gene3D" id="2.60.40.1940">
    <property type="match status" value="1"/>
</dbReference>
<dbReference type="Gene3D" id="6.20.50.160">
    <property type="match status" value="1"/>
</dbReference>
<dbReference type="Gene3D" id="2.60.40.690">
    <property type="entry name" value="Alpha-macroglobulin, receptor-binding domain"/>
    <property type="match status" value="1"/>
</dbReference>
<dbReference type="Gene3D" id="1.20.91.20">
    <property type="entry name" value="Anaphylotoxins (complement system)"/>
    <property type="match status" value="1"/>
</dbReference>
<dbReference type="Gene3D" id="2.60.40.10">
    <property type="entry name" value="Immunoglobulins"/>
    <property type="match status" value="2"/>
</dbReference>
<dbReference type="InterPro" id="IPR009048">
    <property type="entry name" value="A-macroglobulin_rcpt-bd"/>
</dbReference>
<dbReference type="InterPro" id="IPR036595">
    <property type="entry name" value="A-macroglobulin_rcpt-bd_sf"/>
</dbReference>
<dbReference type="InterPro" id="IPR050473">
    <property type="entry name" value="A2M/Complement_sys"/>
</dbReference>
<dbReference type="InterPro" id="IPR011625">
    <property type="entry name" value="A2M_N_BRD"/>
</dbReference>
<dbReference type="InterPro" id="IPR047565">
    <property type="entry name" value="Alpha-macroglob_thiol-ester_cl"/>
</dbReference>
<dbReference type="InterPro" id="IPR011626">
    <property type="entry name" value="Alpha-macroglobulin_TED"/>
</dbReference>
<dbReference type="InterPro" id="IPR000020">
    <property type="entry name" value="Anaphylatoxin/fibulin"/>
</dbReference>
<dbReference type="InterPro" id="IPR018081">
    <property type="entry name" value="Anaphylatoxin_comp_syst"/>
</dbReference>
<dbReference type="InterPro" id="IPR041425">
    <property type="entry name" value="C3/4/5_MG1"/>
</dbReference>
<dbReference type="InterPro" id="IPR013783">
    <property type="entry name" value="Ig-like_fold"/>
</dbReference>
<dbReference type="InterPro" id="IPR008964">
    <property type="entry name" value="Invasin/intimin_cell_adhesion"/>
</dbReference>
<dbReference type="InterPro" id="IPR001599">
    <property type="entry name" value="Macroglobln_a2"/>
</dbReference>
<dbReference type="InterPro" id="IPR019742">
    <property type="entry name" value="MacrogloblnA2_CS"/>
</dbReference>
<dbReference type="InterPro" id="IPR002890">
    <property type="entry name" value="MG2"/>
</dbReference>
<dbReference type="InterPro" id="IPR041555">
    <property type="entry name" value="MG3"/>
</dbReference>
<dbReference type="InterPro" id="IPR040839">
    <property type="entry name" value="MG4"/>
</dbReference>
<dbReference type="InterPro" id="IPR001134">
    <property type="entry name" value="Netrin_domain"/>
</dbReference>
<dbReference type="InterPro" id="IPR018933">
    <property type="entry name" value="Netrin_module_non-TIMP"/>
</dbReference>
<dbReference type="InterPro" id="IPR008930">
    <property type="entry name" value="Terpenoid_cyclase/PrenylTrfase"/>
</dbReference>
<dbReference type="InterPro" id="IPR008993">
    <property type="entry name" value="TIMP-like_OB-fold"/>
</dbReference>
<dbReference type="PANTHER" id="PTHR11412">
    <property type="entry name" value="MACROGLOBULIN / COMPLEMENT"/>
    <property type="match status" value="1"/>
</dbReference>
<dbReference type="PANTHER" id="PTHR11412:SF166">
    <property type="entry name" value="NTR DOMAIN-CONTAINING PROTEIN"/>
    <property type="match status" value="1"/>
</dbReference>
<dbReference type="Pfam" id="PF00207">
    <property type="entry name" value="A2M"/>
    <property type="match status" value="1"/>
</dbReference>
<dbReference type="Pfam" id="PF07703">
    <property type="entry name" value="A2M_BRD"/>
    <property type="match status" value="1"/>
</dbReference>
<dbReference type="Pfam" id="PF07677">
    <property type="entry name" value="A2M_recep"/>
    <property type="match status" value="1"/>
</dbReference>
<dbReference type="Pfam" id="PF01821">
    <property type="entry name" value="ANATO"/>
    <property type="match status" value="1"/>
</dbReference>
<dbReference type="Pfam" id="PF17790">
    <property type="entry name" value="MG1"/>
    <property type="match status" value="1"/>
</dbReference>
<dbReference type="Pfam" id="PF01835">
    <property type="entry name" value="MG2"/>
    <property type="match status" value="1"/>
</dbReference>
<dbReference type="Pfam" id="PF17791">
    <property type="entry name" value="MG3"/>
    <property type="match status" value="1"/>
</dbReference>
<dbReference type="Pfam" id="PF17789">
    <property type="entry name" value="MG4"/>
    <property type="match status" value="1"/>
</dbReference>
<dbReference type="Pfam" id="PF01759">
    <property type="entry name" value="NTR"/>
    <property type="match status" value="1"/>
</dbReference>
<dbReference type="Pfam" id="PF07678">
    <property type="entry name" value="TED_complement"/>
    <property type="match status" value="1"/>
</dbReference>
<dbReference type="SMART" id="SM01360">
    <property type="entry name" value="A2M"/>
    <property type="match status" value="1"/>
</dbReference>
<dbReference type="SMART" id="SM01359">
    <property type="entry name" value="A2M_N_2"/>
    <property type="match status" value="1"/>
</dbReference>
<dbReference type="SMART" id="SM01361">
    <property type="entry name" value="A2M_recep"/>
    <property type="match status" value="1"/>
</dbReference>
<dbReference type="SMART" id="SM00104">
    <property type="entry name" value="ANATO"/>
    <property type="match status" value="1"/>
</dbReference>
<dbReference type="SMART" id="SM00643">
    <property type="entry name" value="C345C"/>
    <property type="match status" value="1"/>
</dbReference>
<dbReference type="SMART" id="SM01419">
    <property type="entry name" value="Thiol-ester_cl"/>
    <property type="match status" value="1"/>
</dbReference>
<dbReference type="SUPFAM" id="SSF49410">
    <property type="entry name" value="Alpha-macroglobulin receptor domain"/>
    <property type="match status" value="1"/>
</dbReference>
<dbReference type="SUPFAM" id="SSF47686">
    <property type="entry name" value="Anaphylotoxins (complement system)"/>
    <property type="match status" value="1"/>
</dbReference>
<dbReference type="SUPFAM" id="SSF49373">
    <property type="entry name" value="Invasin/intimin cell-adhesion fragments"/>
    <property type="match status" value="1"/>
</dbReference>
<dbReference type="SUPFAM" id="SSF48239">
    <property type="entry name" value="Terpenoid cyclases/Protein prenyltransferases"/>
    <property type="match status" value="1"/>
</dbReference>
<dbReference type="SUPFAM" id="SSF50242">
    <property type="entry name" value="TIMP-like"/>
    <property type="match status" value="1"/>
</dbReference>
<dbReference type="PROSITE" id="PS00477">
    <property type="entry name" value="ALPHA_2_MACROGLOBULIN"/>
    <property type="match status" value="1"/>
</dbReference>
<dbReference type="PROSITE" id="PS01177">
    <property type="entry name" value="ANAPHYLATOXIN_1"/>
    <property type="match status" value="1"/>
</dbReference>
<dbReference type="PROSITE" id="PS01178">
    <property type="entry name" value="ANAPHYLATOXIN_2"/>
    <property type="match status" value="1"/>
</dbReference>
<dbReference type="PROSITE" id="PS50189">
    <property type="entry name" value="NTR"/>
    <property type="match status" value="1"/>
</dbReference>
<proteinExistence type="evidence at transcript level"/>
<feature type="signal peptide" evidence="2">
    <location>
        <begin position="1" status="less than"/>
        <end position="13"/>
    </location>
</feature>
<feature type="chain" id="PRO_0000005947" description="Complement C3">
    <location>
        <begin position="14"/>
        <end position="1673"/>
    </location>
</feature>
<feature type="chain" id="PRO_0000005948" description="Complement C3 beta chain" evidence="1">
    <location>
        <begin position="14"/>
        <end position="653"/>
    </location>
</feature>
<feature type="chain" id="PRO_0000005949" description="Complement C3 alpha chain" evidence="1">
    <location>
        <begin position="657"/>
        <end position="1375"/>
    </location>
</feature>
<feature type="chain" id="PRO_0000005950" description="C3a anaphylatoxin" evidence="1">
    <location>
        <begin position="657"/>
        <end position="732"/>
    </location>
</feature>
<feature type="chain" id="PRO_0000005951" description="Complement C3b" evidence="1">
    <location>
        <begin position="733"/>
        <end position="1673"/>
    </location>
</feature>
<feature type="domain" description="Anaphylatoxin-like" evidence="3">
    <location>
        <begin position="678"/>
        <end position="713"/>
    </location>
</feature>
<feature type="domain" description="NTR" evidence="4">
    <location>
        <begin position="1525"/>
        <end position="1671"/>
    </location>
</feature>
<feature type="glycosylation site" description="N-linked (GlcNAc...) asparagine" evidence="2">
    <location>
        <position position="217"/>
    </location>
</feature>
<feature type="glycosylation site" description="N-linked (GlcNAc...) asparagine" evidence="2">
    <location>
        <position position="639"/>
    </location>
</feature>
<feature type="glycosylation site" description="N-linked (GlcNAc...) asparagine" evidence="2">
    <location>
        <position position="1190"/>
    </location>
</feature>
<feature type="glycosylation site" description="N-linked (GlcNAc...) asparagine" evidence="2">
    <location>
        <position position="1317"/>
    </location>
</feature>
<feature type="glycosylation site" description="N-linked (GlcNAc...) asparagine" evidence="2">
    <location>
        <position position="1560"/>
    </location>
</feature>
<feature type="disulfide bond" evidence="1">
    <location>
        <begin position="678"/>
        <end position="705"/>
    </location>
</feature>
<feature type="disulfide bond" evidence="1">
    <location>
        <begin position="679"/>
        <end position="712"/>
    </location>
</feature>
<feature type="disulfide bond" evidence="1">
    <location>
        <begin position="692"/>
        <end position="713"/>
    </location>
</feature>
<feature type="disulfide bond" evidence="1">
    <location>
        <begin position="1525"/>
        <end position="1600"/>
    </location>
</feature>
<feature type="disulfide bond" evidence="1">
    <location>
        <begin position="1546"/>
        <end position="1671"/>
    </location>
</feature>
<feature type="cross-link" description="Isoglutamyl cysteine thioester (Cys-Gln)" evidence="1">
    <location>
        <begin position="986"/>
        <end position="989"/>
    </location>
</feature>
<feature type="non-terminal residue">
    <location>
        <position position="1"/>
    </location>
</feature>
<organism>
    <name type="scientific">Lethenteron camtschaticum</name>
    <name type="common">Japanese lamprey</name>
    <name type="synonym">Lampetra japonica</name>
    <dbReference type="NCBI Taxonomy" id="980415"/>
    <lineage>
        <taxon>Eukaryota</taxon>
        <taxon>Metazoa</taxon>
        <taxon>Chordata</taxon>
        <taxon>Craniata</taxon>
        <taxon>Vertebrata</taxon>
        <taxon>Cyclostomata</taxon>
        <taxon>Hyperoartia</taxon>
        <taxon>Petromyzontiformes</taxon>
        <taxon>Petromyzontidae</taxon>
        <taxon>Lethenteron</taxon>
    </lineage>
</organism>
<comment type="function">
    <text evidence="1">Precursor of non-enzymatic components of the classical, alternative, lectin and GZMK complement pathways, which consist in a cascade of proteins that leads to phagocytosis and breakdown of pathogens and signaling that strengthens the adaptive immune system.</text>
</comment>
<comment type="function">
    <molecule>Complement C3b</molecule>
    <text evidence="1">Non-enzymatic component of C5 convertase. Generated following cleavage by C3 convertase, it covalently attaches to the surface of pathogens, where it acts as an opsonin that marks the surface of antigens for removal. Complement C3b binds covalently via its reactive thioester, to cell surface carbohydrates or immune aggregates. Together with complement C4b, it then recruits the serine protease complement C2b to form the C5 convertase, which cleaves and activate C5, the next component of the complement pathways. In the alternative complement pathway, recruits the serine protease CFB to form the C5 convertase that cleaves and activates C5.</text>
</comment>
<comment type="function">
    <molecule>C3a anaphylatoxin</molecule>
    <text evidence="1">Mediator of local inflammatory process released following cleavage by C3 convertase. Acts by binding to its receptor, C3AR1, activating G protein-coupled receptor signaling, promoting the phosphorylation, ARRB2-mediated internalization and endocytosis of C3AR1. C3a anaphylatoxin stimulates the activation of immune cells such as mast cells and basophilic leukocytes to release inflammation agents, such as cytokines, chemokines and histamine, which promote inflammation development. Also acts as potent chemoattractant for the migration of macrophages and neutrophils to the inflamed tissues, resulting in neutralization of the inflammatory triggers by multiple ways, such as phagocytosis and generation of reactive oxidants.</text>
</comment>
<comment type="subunit">
    <text evidence="1">In absence of complement activation, the C3 precursor is first processed by the removal of 4 Arg residues, forming two chains, beta and alpha, linked by a disulfide bond.</text>
</comment>
<comment type="subunit">
    <molecule>Complement C3b</molecule>
    <text evidence="1">Complement C3b is composed of complement C3b and complement C3 beta chains that are associated via disulfide bonds. Non-enzymatic component of the C5 convertase, also named C4bC2bC3b, composed of the serine protease complement C2b (C2), complement C3b, as well as complement C4b (C4). Non-enzymatic component of the C5 convertase of the alternative complement pathways composed of the serine protease complement CFB and complement C3b. Interacts with CFP; interaction takes place together with CFB in the alternative complement system and allows the complex to become active. Interacts with CR1 (via Sushi 8 and Sushi 9 domains). Interacts with CFH.</text>
</comment>
<comment type="subcellular location">
    <subcellularLocation>
        <location evidence="1">Secreted</location>
    </subcellularLocation>
</comment>
<comment type="subcellular location">
    <molecule>Complement C3b</molecule>
    <subcellularLocation>
        <location evidence="1">Secreted</location>
    </subcellularLocation>
    <subcellularLocation>
        <location evidence="1">Cell surface</location>
    </subcellularLocation>
    <text evidence="1">Covalently associated with the surface of pathogens: the internal thioester bond reacts with carbohydrate antigens on the target surface to form amide or ester bonds.</text>
</comment>
<comment type="subcellular location">
    <molecule>C3a anaphylatoxin</molecule>
    <subcellularLocation>
        <location evidence="1">Secreted</location>
    </subcellularLocation>
</comment>
<comment type="PTM">
    <text evidence="1">C3 precursor is first processed by the removal of 4 Arg residues, forming two chains, beta and alpha, linked by a disulfide bond. During activation of the complement systems, the alpha chain is cleaved into C3a and C3b by the C3 convertase: C3b stays linked to the beta chain, while C3a is released in the plasma. The alpha chain is cleaved by the serine protease complement C2b component of the C3 convertase to generate C3a and C3b following activation by the classical, lectin and GZMK complement systems. The alpha chain is cleaved by CFB component of the C3 convertase to generate C3a and C3b following activation by the alternative complement system.</text>
</comment>
<comment type="PTM">
    <molecule>C3a anaphylatoxin</molecule>
    <text evidence="1">C3a is further processed by carboxypeptidases to release the C-terminal arginine residue generating the acylation stimulating protein (ASP). Levels of ASP are increased in adipocytes in the postprandial period and by insulin and dietary chylomicrons.</text>
</comment>
<comment type="PTM">
    <molecule>Complement C3b</molecule>
    <text evidence="1">Complement C3b is rapidly split in two positions by factor I (CFI) and a cofactor (CFH) to form iC3b (inactivated C3b) and C3f which is released. CFI and CFH catalyze proteolytic degradation of already-deposited complement C3b. Then iC3b is slowly cleaved (possibly by CFI) to form C3c (beta chain + alpha' chain fragment 1 + alpha' chain fragment 2), C3dg and C3f. Other proteases produce other fragments such as C3d or C3g.</text>
</comment>
<comment type="PTM">
    <molecule>Complement C3b</molecule>
    <text evidence="1">Upon activation, the internal thioester bond reacts with carbohydrate antigens on the target surface to form amide or ester bonds, leading to covalent association with the surface of pathogens.</text>
</comment>
<comment type="PTM">
    <molecule>Complement C3b</molecule>
    <text evidence="1">Complement C3b interacts with complement C4b via a thioester linkage.</text>
</comment>
<comment type="PTM">
    <text evidence="1">Phosphorylated by FAM20C in the extracellular medium.</text>
</comment>
<gene>
    <name type="primary">C3</name>
</gene>
<reference key="1">
    <citation type="journal article" date="1992" name="J. Immunol.">
        <title>Complete complementary DNA sequence of the third component of complement of lamprey. Implication for the evolution of thioester containing proteins.</title>
        <authorList>
            <person name="Nonaka M."/>
            <person name="Takahashi M."/>
        </authorList>
    </citation>
    <scope>NUCLEOTIDE SEQUENCE [MRNA]</scope>
    <source>
        <tissue>Liver</tissue>
    </source>
</reference>
<protein>
    <recommendedName>
        <fullName>Complement C3</fullName>
    </recommendedName>
    <component>
        <recommendedName>
            <fullName>Complement C3 beta chain</fullName>
        </recommendedName>
    </component>
    <component>
        <recommendedName>
            <fullName>Complement C3 alpha chain</fullName>
        </recommendedName>
    </component>
    <component>
        <recommendedName>
            <fullName>C3a anaphylatoxin</fullName>
        </recommendedName>
    </component>
    <component>
        <recommendedName>
            <fullName>Complement C3b</fullName>
        </recommendedName>
        <alternativeName>
            <fullName>Complement C3b-alpha' chain</fullName>
        </alternativeName>
    </component>
</protein>
<keyword id="KW-0165">Cleavage on pair of basic residues</keyword>
<keyword id="KW-0180">Complement pathway</keyword>
<keyword id="KW-1015">Disulfide bond</keyword>
<keyword id="KW-0325">Glycoprotein</keyword>
<keyword id="KW-0391">Immunity</keyword>
<keyword id="KW-0395">Inflammatory response</keyword>
<keyword id="KW-0399">Innate immunity</keyword>
<keyword id="KW-0964">Secreted</keyword>
<keyword id="KW-0732">Signal</keyword>
<keyword id="KW-0882">Thioester bond</keyword>
<sequence>VLLLMSVGTSVTQDPMVLLSVPSVILIGSDVNVLVDHAASTEDVSVVVRAEEFLTKKQLATQTITLTQLDPAIATLKLGFDIENPDKTNSASTKHHVRLVAKVESKSFNKEITAHALLSYRSGHVVVQTDKPIYTPDEKVKYRMFPMNREDVHRIPVRQSMTVDIVNADGVIVERQIKTIKATDEGIVDGTSFTIPAISKHGTWKIFARMSGAPNINSSAEFDVREYILPTFEVKINPKQRVFHINDEEFVVDITANYFNQELVSGTAYVRYFLENGDVPKLVDSSSTTLVAGEGLSILKKEKLLKLFPNAKDLLAFSLTIKTTVLSSQAAETEEAELVGIKIVESRYQITATKTSRYFKPELPYFIQVEVRNADGSPSKEVDVVAKVQVGSATINPQKMRTDSNGLTSFTVTPPNVNQLTVTVRTDERHPSNEQGELVYTAQKYASASYMHIDVTRIMRLGETLNVFLTAKTTQLNAVTHFTYMVLTRGVIVKTNRKTKESGGGPSNVRIPITPDMAPRFRFLAYYILPGGEIVADSVTVEVTELCKSQVSLSLKGRPTLEPKAMLTLDLIGEPDARVGLLAVDQAVYAVNRKHRLTQDRVWKAMETFDTGCTAEGGAGRPGVFSDAGLALITSKGLNTTDRSEIGCPKVPSRKPRQLSMLQIRREAEKYTQEFRKCCVDGLKMSPTGQGCEERLKRVTGPKECVDAFLQCCKKAEEYRKSESLGAKTVLRRNDFMELDLMNEDEVNMMAYFPQSWGWNKYKNSCKYGRHPQIRLQLPDTITTWNMQAVSISKTRGVCLADPLLLVSTKDFFIKLHLPYSVKRGEQTEIRVILYNYMEESLTILTEMDIVESICSTSKSGAKPSQKSTVKGKGAMVVSFPIVPLKIGEHHISIRSRVYGRTFGDGVQKILRVAPEGVRDIRSESRSVHVEERETFFIKNEISPDVVPNSDVLTFISVKGDELAETMVNCLDAKSISNLIQIPTGCGEQNMIKMAPTTLTLIYLDSVQEWEKIGLHRREEAIGFLKQGYSRELSYRKADHSYAAFIKRPSSTWLTAFVVKVYSLAKRVIIVDNQELCGPVEWIIKNRQNSDGSYREDGPVIHREMQGGVGGTEGHVSMTAFILIGIQQAQEYCGVSVPNYKQSMNRAVQFLASKVSDLKRMYTIAITRYALALQDPESEAAHSSWKKLENRTTFESKGHRYWKAEETSHVLRMSAISVEATAYGLLTYLRKKDYESAREIVDWLTEQRNYGGGFQSTQDTILALQAMAQYKMDSSSKELIDVQLEITSPKNNFEKKMKITEETRFVQEPHKIPPGGNITIKASGRGTFTLSIMSVFNKVAPSSKSCSTFDLKVTMTEADDGESPQGRLGWFDGKRRRRRDIGDEGGVEAVYRMNMCTRYKPRKEDLSSESGMTIIEVNMLTGFIPDKNDLIQLKESVDKYISNYEITDSVLIIYWDKVPSTEDYCFAFKIKQMLRSDMIQPVTASVYDYYSPADKCTRLYNLPGGYVELSPLCQNDLCQCVEVSCPAKKPKFDTSITVLHRQEAACVAGIDYAYVGIVDNRTEVGSFVYYTVNIQTVIKSGQDQAIQPKATRLFIVTRSCDGRLGMETPRQYLLMGRKGETKDRNDRFQYVLDASSWVEQWPVDEKCNQPNVQTFCAIKREYEFSMQIQGCSS</sequence>